<protein>
    <recommendedName>
        <fullName evidence="1">N-acetyl-gamma-glutamyl-phosphate reductase</fullName>
        <shortName evidence="1">AGPR</shortName>
        <ecNumber evidence="1">1.2.1.38</ecNumber>
    </recommendedName>
    <alternativeName>
        <fullName evidence="1">N-acetyl-glutamate semialdehyde dehydrogenase</fullName>
        <shortName evidence="1">NAGSA dehydrogenase</shortName>
    </alternativeName>
</protein>
<gene>
    <name evidence="1" type="primary">argC</name>
    <name type="ordered locus">SAV0184</name>
</gene>
<keyword id="KW-0028">Amino-acid biosynthesis</keyword>
<keyword id="KW-0055">Arginine biosynthesis</keyword>
<keyword id="KW-0963">Cytoplasm</keyword>
<keyword id="KW-0521">NADP</keyword>
<keyword id="KW-0560">Oxidoreductase</keyword>
<comment type="function">
    <text evidence="1">Catalyzes the NADPH-dependent reduction of N-acetyl-5-glutamyl phosphate to yield N-acetyl-L-glutamate 5-semialdehyde.</text>
</comment>
<comment type="catalytic activity">
    <reaction evidence="1">
        <text>N-acetyl-L-glutamate 5-semialdehyde + phosphate + NADP(+) = N-acetyl-L-glutamyl 5-phosphate + NADPH + H(+)</text>
        <dbReference type="Rhea" id="RHEA:21588"/>
        <dbReference type="ChEBI" id="CHEBI:15378"/>
        <dbReference type="ChEBI" id="CHEBI:29123"/>
        <dbReference type="ChEBI" id="CHEBI:43474"/>
        <dbReference type="ChEBI" id="CHEBI:57783"/>
        <dbReference type="ChEBI" id="CHEBI:57936"/>
        <dbReference type="ChEBI" id="CHEBI:58349"/>
        <dbReference type="EC" id="1.2.1.38"/>
    </reaction>
</comment>
<comment type="pathway">
    <text evidence="1">Amino-acid biosynthesis; L-arginine biosynthesis; N(2)-acetyl-L-ornithine from L-glutamate: step 3/4.</text>
</comment>
<comment type="subcellular location">
    <subcellularLocation>
        <location evidence="1">Cytoplasm</location>
    </subcellularLocation>
</comment>
<comment type="similarity">
    <text evidence="1">Belongs to the NAGSA dehydrogenase family. Type 1 subfamily.</text>
</comment>
<feature type="chain" id="PRO_0000112449" description="N-acetyl-gamma-glutamyl-phosphate reductase">
    <location>
        <begin position="1"/>
        <end position="343"/>
    </location>
</feature>
<feature type="active site" evidence="1">
    <location>
        <position position="147"/>
    </location>
</feature>
<dbReference type="EC" id="1.2.1.38" evidence="1"/>
<dbReference type="EMBL" id="BA000017">
    <property type="protein sequence ID" value="BAB56346.1"/>
    <property type="molecule type" value="Genomic_DNA"/>
</dbReference>
<dbReference type="RefSeq" id="WP_000598482.1">
    <property type="nucleotide sequence ID" value="NC_002758.2"/>
</dbReference>
<dbReference type="SMR" id="P63564"/>
<dbReference type="KEGG" id="sav:SAV0184"/>
<dbReference type="HOGENOM" id="CLU_006384_0_1_9"/>
<dbReference type="PhylomeDB" id="P63564"/>
<dbReference type="UniPathway" id="UPA00068">
    <property type="reaction ID" value="UER00108"/>
</dbReference>
<dbReference type="Proteomes" id="UP000002481">
    <property type="component" value="Chromosome"/>
</dbReference>
<dbReference type="GO" id="GO:0005737">
    <property type="term" value="C:cytoplasm"/>
    <property type="evidence" value="ECO:0007669"/>
    <property type="project" value="UniProtKB-SubCell"/>
</dbReference>
<dbReference type="GO" id="GO:0003942">
    <property type="term" value="F:N-acetyl-gamma-glutamyl-phosphate reductase activity"/>
    <property type="evidence" value="ECO:0007669"/>
    <property type="project" value="UniProtKB-UniRule"/>
</dbReference>
<dbReference type="GO" id="GO:0051287">
    <property type="term" value="F:NAD binding"/>
    <property type="evidence" value="ECO:0007669"/>
    <property type="project" value="InterPro"/>
</dbReference>
<dbReference type="GO" id="GO:0070401">
    <property type="term" value="F:NADP+ binding"/>
    <property type="evidence" value="ECO:0007669"/>
    <property type="project" value="InterPro"/>
</dbReference>
<dbReference type="GO" id="GO:0006526">
    <property type="term" value="P:L-arginine biosynthetic process"/>
    <property type="evidence" value="ECO:0007669"/>
    <property type="project" value="UniProtKB-UniRule"/>
</dbReference>
<dbReference type="CDD" id="cd23934">
    <property type="entry name" value="AGPR_1_C"/>
    <property type="match status" value="1"/>
</dbReference>
<dbReference type="CDD" id="cd17895">
    <property type="entry name" value="AGPR_1_N"/>
    <property type="match status" value="1"/>
</dbReference>
<dbReference type="FunFam" id="3.30.360.10:FF:000014">
    <property type="entry name" value="N-acetyl-gamma-glutamyl-phosphate reductase"/>
    <property type="match status" value="1"/>
</dbReference>
<dbReference type="Gene3D" id="3.30.360.10">
    <property type="entry name" value="Dihydrodipicolinate Reductase, domain 2"/>
    <property type="match status" value="1"/>
</dbReference>
<dbReference type="Gene3D" id="3.40.50.720">
    <property type="entry name" value="NAD(P)-binding Rossmann-like Domain"/>
    <property type="match status" value="1"/>
</dbReference>
<dbReference type="HAMAP" id="MF_00150">
    <property type="entry name" value="ArgC_type1"/>
    <property type="match status" value="1"/>
</dbReference>
<dbReference type="InterPro" id="IPR023013">
    <property type="entry name" value="AGPR_AS"/>
</dbReference>
<dbReference type="InterPro" id="IPR000706">
    <property type="entry name" value="AGPR_type-1"/>
</dbReference>
<dbReference type="InterPro" id="IPR036291">
    <property type="entry name" value="NAD(P)-bd_dom_sf"/>
</dbReference>
<dbReference type="InterPro" id="IPR050085">
    <property type="entry name" value="NAGSA_dehydrogenase"/>
</dbReference>
<dbReference type="InterPro" id="IPR000534">
    <property type="entry name" value="Semialdehyde_DH_NAD-bd"/>
</dbReference>
<dbReference type="NCBIfam" id="TIGR01850">
    <property type="entry name" value="argC"/>
    <property type="match status" value="1"/>
</dbReference>
<dbReference type="PANTHER" id="PTHR32338:SF10">
    <property type="entry name" value="N-ACETYL-GAMMA-GLUTAMYL-PHOSPHATE REDUCTASE, CHLOROPLASTIC-RELATED"/>
    <property type="match status" value="1"/>
</dbReference>
<dbReference type="PANTHER" id="PTHR32338">
    <property type="entry name" value="N-ACETYL-GAMMA-GLUTAMYL-PHOSPHATE REDUCTASE, CHLOROPLASTIC-RELATED-RELATED"/>
    <property type="match status" value="1"/>
</dbReference>
<dbReference type="Pfam" id="PF01118">
    <property type="entry name" value="Semialdhyde_dh"/>
    <property type="match status" value="1"/>
</dbReference>
<dbReference type="Pfam" id="PF22698">
    <property type="entry name" value="Semialdhyde_dhC_1"/>
    <property type="match status" value="1"/>
</dbReference>
<dbReference type="SMART" id="SM00859">
    <property type="entry name" value="Semialdhyde_dh"/>
    <property type="match status" value="1"/>
</dbReference>
<dbReference type="SUPFAM" id="SSF55347">
    <property type="entry name" value="Glyceraldehyde-3-phosphate dehydrogenase-like, C-terminal domain"/>
    <property type="match status" value="1"/>
</dbReference>
<dbReference type="SUPFAM" id="SSF51735">
    <property type="entry name" value="NAD(P)-binding Rossmann-fold domains"/>
    <property type="match status" value="1"/>
</dbReference>
<dbReference type="PROSITE" id="PS01224">
    <property type="entry name" value="ARGC"/>
    <property type="match status" value="1"/>
</dbReference>
<proteinExistence type="inferred from homology"/>
<evidence type="ECO:0000255" key="1">
    <source>
        <dbReference type="HAMAP-Rule" id="MF_00150"/>
    </source>
</evidence>
<organism>
    <name type="scientific">Staphylococcus aureus (strain Mu50 / ATCC 700699)</name>
    <dbReference type="NCBI Taxonomy" id="158878"/>
    <lineage>
        <taxon>Bacteria</taxon>
        <taxon>Bacillati</taxon>
        <taxon>Bacillota</taxon>
        <taxon>Bacilli</taxon>
        <taxon>Bacillales</taxon>
        <taxon>Staphylococcaceae</taxon>
        <taxon>Staphylococcus</taxon>
    </lineage>
</organism>
<reference key="1">
    <citation type="journal article" date="2001" name="Lancet">
        <title>Whole genome sequencing of meticillin-resistant Staphylococcus aureus.</title>
        <authorList>
            <person name="Kuroda M."/>
            <person name="Ohta T."/>
            <person name="Uchiyama I."/>
            <person name="Baba T."/>
            <person name="Yuzawa H."/>
            <person name="Kobayashi I."/>
            <person name="Cui L."/>
            <person name="Oguchi A."/>
            <person name="Aoki K."/>
            <person name="Nagai Y."/>
            <person name="Lian J.-Q."/>
            <person name="Ito T."/>
            <person name="Kanamori M."/>
            <person name="Matsumaru H."/>
            <person name="Maruyama A."/>
            <person name="Murakami H."/>
            <person name="Hosoyama A."/>
            <person name="Mizutani-Ui Y."/>
            <person name="Takahashi N.K."/>
            <person name="Sawano T."/>
            <person name="Inoue R."/>
            <person name="Kaito C."/>
            <person name="Sekimizu K."/>
            <person name="Hirakawa H."/>
            <person name="Kuhara S."/>
            <person name="Goto S."/>
            <person name="Yabuzaki J."/>
            <person name="Kanehisa M."/>
            <person name="Yamashita A."/>
            <person name="Oshima K."/>
            <person name="Furuya K."/>
            <person name="Yoshino C."/>
            <person name="Shiba T."/>
            <person name="Hattori M."/>
            <person name="Ogasawara N."/>
            <person name="Hayashi H."/>
            <person name="Hiramatsu K."/>
        </authorList>
    </citation>
    <scope>NUCLEOTIDE SEQUENCE [LARGE SCALE GENOMIC DNA]</scope>
    <source>
        <strain>Mu50 / ATCC 700699</strain>
    </source>
</reference>
<name>ARGC_STAAM</name>
<sequence>MIKVGIVGGSGYGAIELIRLLQTHPHVTIAHIYSHSKVDEPLKLTFPHLQHIMQHFEALTVDNNDCDVIFFATPAPVSKTCIPPLVEKGIHVIDLSGAFRIKNREIYEAYYKETAAAQDDLNHAIYSISEWQSFDNNGTKLISNPGCFPTATLLALHPLISEKIVDLSSIIIDAKTGVSGAGRSLSQRVHFSEMNENLSAYAIGNHKHKPEIEQYLSIIAGQDVSVIFTPHLVPMTRGILSTIYVKFSSEYTTESLHKLMTSYYANQPFVRIRDIGTFPTTKEVLGSNYCDIGIYVDETTQTAILVSVIDNLVKGASGQAIQNLNILYDFEVTTGLNQSPVYP</sequence>
<accession>P63564</accession>
<accession>Q99X37</accession>